<gene>
    <name evidence="1" type="primary">rplC</name>
    <name type="ordered locus">Mmcs_1013</name>
</gene>
<protein>
    <recommendedName>
        <fullName evidence="1">Large ribosomal subunit protein uL3</fullName>
    </recommendedName>
    <alternativeName>
        <fullName evidence="2">50S ribosomal protein L3</fullName>
    </alternativeName>
</protein>
<name>RL3_MYCSS</name>
<feature type="chain" id="PRO_1000052091" description="Large ribosomal subunit protein uL3">
    <location>
        <begin position="1"/>
        <end position="217"/>
    </location>
</feature>
<organism>
    <name type="scientific">Mycobacterium sp. (strain MCS)</name>
    <dbReference type="NCBI Taxonomy" id="164756"/>
    <lineage>
        <taxon>Bacteria</taxon>
        <taxon>Bacillati</taxon>
        <taxon>Actinomycetota</taxon>
        <taxon>Actinomycetes</taxon>
        <taxon>Mycobacteriales</taxon>
        <taxon>Mycobacteriaceae</taxon>
        <taxon>Mycobacterium</taxon>
    </lineage>
</organism>
<keyword id="KW-0687">Ribonucleoprotein</keyword>
<keyword id="KW-0689">Ribosomal protein</keyword>
<keyword id="KW-0694">RNA-binding</keyword>
<keyword id="KW-0699">rRNA-binding</keyword>
<proteinExistence type="inferred from homology"/>
<comment type="function">
    <text evidence="1">One of the primary rRNA binding proteins, it binds directly near the 3'-end of the 23S rRNA, where it nucleates assembly of the 50S subunit.</text>
</comment>
<comment type="subunit">
    <text evidence="1">Part of the 50S ribosomal subunit. Forms a cluster with proteins L14 and L19.</text>
</comment>
<comment type="similarity">
    <text evidence="1">Belongs to the universal ribosomal protein uL3 family.</text>
</comment>
<sequence>MARKGILGTKLGMTQVFDENNKVVPVTVVKAGPNVVTRIRTPERDGYSAVQIAYGEISPRKVNKPVTGQFAAAGVNPRRHLAELRLDDESAAADYEVGQELTAEVFSDGAYVDVTGTSKGKGFAGTMKRHGFKGQGAAHGAQAVHRRPGSIGGCATPGRVFKGTRMSGRMGSDRVTTQNLVVHKVDAANGVLLIKGAIPGRNGGLVMVRSAIKRGEK</sequence>
<dbReference type="EMBL" id="CP000384">
    <property type="protein sequence ID" value="ABG07127.1"/>
    <property type="molecule type" value="Genomic_DNA"/>
</dbReference>
<dbReference type="SMR" id="Q1BDA7"/>
<dbReference type="KEGG" id="mmc:Mmcs_1013"/>
<dbReference type="HOGENOM" id="CLU_044142_4_1_11"/>
<dbReference type="BioCyc" id="MSP164756:G1G6O-1037-MONOMER"/>
<dbReference type="GO" id="GO:0022625">
    <property type="term" value="C:cytosolic large ribosomal subunit"/>
    <property type="evidence" value="ECO:0007669"/>
    <property type="project" value="TreeGrafter"/>
</dbReference>
<dbReference type="GO" id="GO:0019843">
    <property type="term" value="F:rRNA binding"/>
    <property type="evidence" value="ECO:0007669"/>
    <property type="project" value="UniProtKB-UniRule"/>
</dbReference>
<dbReference type="GO" id="GO:0003735">
    <property type="term" value="F:structural constituent of ribosome"/>
    <property type="evidence" value="ECO:0007669"/>
    <property type="project" value="InterPro"/>
</dbReference>
<dbReference type="GO" id="GO:0006412">
    <property type="term" value="P:translation"/>
    <property type="evidence" value="ECO:0007669"/>
    <property type="project" value="UniProtKB-UniRule"/>
</dbReference>
<dbReference type="FunFam" id="2.40.30.10:FF:000004">
    <property type="entry name" value="50S ribosomal protein L3"/>
    <property type="match status" value="1"/>
</dbReference>
<dbReference type="FunFam" id="3.30.160.810:FF:000001">
    <property type="entry name" value="50S ribosomal protein L3"/>
    <property type="match status" value="1"/>
</dbReference>
<dbReference type="Gene3D" id="3.30.160.810">
    <property type="match status" value="1"/>
</dbReference>
<dbReference type="Gene3D" id="2.40.30.10">
    <property type="entry name" value="Translation factors"/>
    <property type="match status" value="1"/>
</dbReference>
<dbReference type="HAMAP" id="MF_01325_B">
    <property type="entry name" value="Ribosomal_uL3_B"/>
    <property type="match status" value="1"/>
</dbReference>
<dbReference type="InterPro" id="IPR000597">
    <property type="entry name" value="Ribosomal_uL3"/>
</dbReference>
<dbReference type="InterPro" id="IPR019927">
    <property type="entry name" value="Ribosomal_uL3_bac/org-type"/>
</dbReference>
<dbReference type="InterPro" id="IPR019926">
    <property type="entry name" value="Ribosomal_uL3_CS"/>
</dbReference>
<dbReference type="InterPro" id="IPR009000">
    <property type="entry name" value="Transl_B-barrel_sf"/>
</dbReference>
<dbReference type="NCBIfam" id="TIGR03625">
    <property type="entry name" value="L3_bact"/>
    <property type="match status" value="1"/>
</dbReference>
<dbReference type="PANTHER" id="PTHR11229">
    <property type="entry name" value="50S RIBOSOMAL PROTEIN L3"/>
    <property type="match status" value="1"/>
</dbReference>
<dbReference type="PANTHER" id="PTHR11229:SF16">
    <property type="entry name" value="LARGE RIBOSOMAL SUBUNIT PROTEIN UL3C"/>
    <property type="match status" value="1"/>
</dbReference>
<dbReference type="Pfam" id="PF00297">
    <property type="entry name" value="Ribosomal_L3"/>
    <property type="match status" value="1"/>
</dbReference>
<dbReference type="SUPFAM" id="SSF50447">
    <property type="entry name" value="Translation proteins"/>
    <property type="match status" value="1"/>
</dbReference>
<dbReference type="PROSITE" id="PS00474">
    <property type="entry name" value="RIBOSOMAL_L3"/>
    <property type="match status" value="1"/>
</dbReference>
<evidence type="ECO:0000255" key="1">
    <source>
        <dbReference type="HAMAP-Rule" id="MF_01325"/>
    </source>
</evidence>
<evidence type="ECO:0000305" key="2"/>
<accession>Q1BDA7</accession>
<reference key="1">
    <citation type="submission" date="2006-06" db="EMBL/GenBank/DDBJ databases">
        <title>Complete sequence of chromosome of Mycobacterium sp. MCS.</title>
        <authorList>
            <consortium name="US DOE Joint Genome Institute"/>
            <person name="Copeland A."/>
            <person name="Lucas S."/>
            <person name="Lapidus A."/>
            <person name="Barry K."/>
            <person name="Detter J.C."/>
            <person name="Glavina del Rio T."/>
            <person name="Hammon N."/>
            <person name="Israni S."/>
            <person name="Dalin E."/>
            <person name="Tice H."/>
            <person name="Pitluck S."/>
            <person name="Martinez M."/>
            <person name="Schmutz J."/>
            <person name="Larimer F."/>
            <person name="Land M."/>
            <person name="Hauser L."/>
            <person name="Kyrpides N."/>
            <person name="Kim E."/>
            <person name="Miller C.D."/>
            <person name="Hughes J.E."/>
            <person name="Anderson A.J."/>
            <person name="Sims R.C."/>
            <person name="Richardson P."/>
        </authorList>
    </citation>
    <scope>NUCLEOTIDE SEQUENCE [LARGE SCALE GENOMIC DNA]</scope>
    <source>
        <strain>MCS</strain>
    </source>
</reference>